<feature type="chain" id="PRO_1000021807" description="Homoserine O-succinyltransferase">
    <location>
        <begin position="1"/>
        <end position="309"/>
    </location>
</feature>
<feature type="active site" description="Acyl-thioester intermediate" evidence="1">
    <location>
        <position position="142"/>
    </location>
</feature>
<feature type="active site" description="Proton acceptor" evidence="1">
    <location>
        <position position="235"/>
    </location>
</feature>
<feature type="active site" evidence="1">
    <location>
        <position position="237"/>
    </location>
</feature>
<feature type="binding site" evidence="1">
    <location>
        <position position="163"/>
    </location>
    <ligand>
        <name>substrate</name>
    </ligand>
</feature>
<feature type="binding site" evidence="1">
    <location>
        <position position="192"/>
    </location>
    <ligand>
        <name>substrate</name>
    </ligand>
</feature>
<feature type="binding site" evidence="1">
    <location>
        <position position="249"/>
    </location>
    <ligand>
        <name>substrate</name>
    </ligand>
</feature>
<feature type="site" description="Important for acyl-CoA specificity" evidence="1">
    <location>
        <position position="111"/>
    </location>
</feature>
<feature type="site" description="Important for substrate specificity" evidence="1">
    <location>
        <position position="192"/>
    </location>
</feature>
<reference key="1">
    <citation type="submission" date="2007-08" db="EMBL/GenBank/DDBJ databases">
        <authorList>
            <consortium name="The Citrobacter koseri Genome Sequencing Project"/>
            <person name="McClelland M."/>
            <person name="Sanderson E.K."/>
            <person name="Porwollik S."/>
            <person name="Spieth J."/>
            <person name="Clifton W.S."/>
            <person name="Latreille P."/>
            <person name="Courtney L."/>
            <person name="Wang C."/>
            <person name="Pepin K."/>
            <person name="Bhonagiri V."/>
            <person name="Nash W."/>
            <person name="Johnson M."/>
            <person name="Thiruvilangam P."/>
            <person name="Wilson R."/>
        </authorList>
    </citation>
    <scope>NUCLEOTIDE SEQUENCE [LARGE SCALE GENOMIC DNA]</scope>
    <source>
        <strain>ATCC BAA-895 / CDC 4225-83 / SGSC4696</strain>
    </source>
</reference>
<accession>A8ANC0</accession>
<proteinExistence type="inferred from homology"/>
<protein>
    <recommendedName>
        <fullName evidence="1">Homoserine O-succinyltransferase</fullName>
        <shortName evidence="1">HST</shortName>
        <ecNumber evidence="1">2.3.1.46</ecNumber>
    </recommendedName>
    <alternativeName>
        <fullName evidence="1">Homoserine transsuccinylase</fullName>
        <shortName evidence="1">HTS</shortName>
    </alternativeName>
</protein>
<organism>
    <name type="scientific">Citrobacter koseri (strain ATCC BAA-895 / CDC 4225-83 / SGSC4696)</name>
    <dbReference type="NCBI Taxonomy" id="290338"/>
    <lineage>
        <taxon>Bacteria</taxon>
        <taxon>Pseudomonadati</taxon>
        <taxon>Pseudomonadota</taxon>
        <taxon>Gammaproteobacteria</taxon>
        <taxon>Enterobacterales</taxon>
        <taxon>Enterobacteriaceae</taxon>
        <taxon>Citrobacter</taxon>
    </lineage>
</organism>
<evidence type="ECO:0000255" key="1">
    <source>
        <dbReference type="HAMAP-Rule" id="MF_00295"/>
    </source>
</evidence>
<sequence length="309" mass="35631">MPIRVLDELPAVNFLREENVFVMTTSRASGQEIRPLKVLILNLMPKKIETENQFLRLLSNSPLQVDVQLLRIDARESRNTPAEHLNNFYCNFEDICDQNFDGLIVTGAPLGLVEFNDVAYWPQIKQVLEWAKDHVTSTLFVCWAVQAALNILYGIPKQTRTDKLSGVYEHHILHPHALLTRGFDDSFLAPHSRYADFPAALIRDYTDLEILAETEDGDAYLFASKDKRIAFVTGHPEYDAHTLASEYFRDVEAGLSPNVPYNYFPKNDPQNKPRATWRSHGNLLFTNWLNYYVYQITPYDLRHMNPTLD</sequence>
<dbReference type="EC" id="2.3.1.46" evidence="1"/>
<dbReference type="EMBL" id="CP000822">
    <property type="protein sequence ID" value="ABV14983.1"/>
    <property type="molecule type" value="Genomic_DNA"/>
</dbReference>
<dbReference type="SMR" id="A8ANC0"/>
<dbReference type="STRING" id="290338.CKO_03907"/>
<dbReference type="GeneID" id="45137571"/>
<dbReference type="KEGG" id="cko:CKO_03907"/>
<dbReference type="HOGENOM" id="CLU_057851_0_1_6"/>
<dbReference type="OrthoDB" id="9772423at2"/>
<dbReference type="UniPathway" id="UPA00051">
    <property type="reaction ID" value="UER00075"/>
</dbReference>
<dbReference type="Proteomes" id="UP000008148">
    <property type="component" value="Chromosome"/>
</dbReference>
<dbReference type="GO" id="GO:0005737">
    <property type="term" value="C:cytoplasm"/>
    <property type="evidence" value="ECO:0007669"/>
    <property type="project" value="UniProtKB-SubCell"/>
</dbReference>
<dbReference type="GO" id="GO:0004414">
    <property type="term" value="F:homoserine O-acetyltransferase activity"/>
    <property type="evidence" value="ECO:0007669"/>
    <property type="project" value="UniProtKB-UniRule"/>
</dbReference>
<dbReference type="GO" id="GO:0008899">
    <property type="term" value="F:homoserine O-succinyltransferase activity"/>
    <property type="evidence" value="ECO:0007669"/>
    <property type="project" value="UniProtKB-EC"/>
</dbReference>
<dbReference type="GO" id="GO:0019281">
    <property type="term" value="P:L-methionine biosynthetic process from homoserine via O-succinyl-L-homoserine and cystathionine"/>
    <property type="evidence" value="ECO:0007669"/>
    <property type="project" value="InterPro"/>
</dbReference>
<dbReference type="CDD" id="cd03131">
    <property type="entry name" value="GATase1_HTS"/>
    <property type="match status" value="1"/>
</dbReference>
<dbReference type="FunFam" id="3.40.50.880:FF:000004">
    <property type="entry name" value="Homoserine O-succinyltransferase"/>
    <property type="match status" value="1"/>
</dbReference>
<dbReference type="Gene3D" id="3.40.50.880">
    <property type="match status" value="1"/>
</dbReference>
<dbReference type="HAMAP" id="MF_00295">
    <property type="entry name" value="MetA_acyltransf"/>
    <property type="match status" value="1"/>
</dbReference>
<dbReference type="InterPro" id="IPR029062">
    <property type="entry name" value="Class_I_gatase-like"/>
</dbReference>
<dbReference type="InterPro" id="IPR005697">
    <property type="entry name" value="HST_MetA"/>
</dbReference>
<dbReference type="InterPro" id="IPR033752">
    <property type="entry name" value="MetA_family"/>
</dbReference>
<dbReference type="NCBIfam" id="TIGR01001">
    <property type="entry name" value="metA"/>
    <property type="match status" value="1"/>
</dbReference>
<dbReference type="PANTHER" id="PTHR20919">
    <property type="entry name" value="HOMOSERINE O-SUCCINYLTRANSFERASE"/>
    <property type="match status" value="1"/>
</dbReference>
<dbReference type="PANTHER" id="PTHR20919:SF0">
    <property type="entry name" value="HOMOSERINE O-SUCCINYLTRANSFERASE"/>
    <property type="match status" value="1"/>
</dbReference>
<dbReference type="Pfam" id="PF04204">
    <property type="entry name" value="HTS"/>
    <property type="match status" value="1"/>
</dbReference>
<dbReference type="PIRSF" id="PIRSF000450">
    <property type="entry name" value="H_ser_succinyltr"/>
    <property type="match status" value="1"/>
</dbReference>
<dbReference type="SUPFAM" id="SSF52317">
    <property type="entry name" value="Class I glutamine amidotransferase-like"/>
    <property type="match status" value="1"/>
</dbReference>
<comment type="function">
    <text evidence="1">Transfers a succinyl group from succinyl-CoA to L-homoserine, forming succinyl-L-homoserine.</text>
</comment>
<comment type="catalytic activity">
    <reaction evidence="1">
        <text>L-homoserine + succinyl-CoA = O-succinyl-L-homoserine + CoA</text>
        <dbReference type="Rhea" id="RHEA:22008"/>
        <dbReference type="ChEBI" id="CHEBI:57287"/>
        <dbReference type="ChEBI" id="CHEBI:57292"/>
        <dbReference type="ChEBI" id="CHEBI:57476"/>
        <dbReference type="ChEBI" id="CHEBI:57661"/>
        <dbReference type="EC" id="2.3.1.46"/>
    </reaction>
</comment>
<comment type="pathway">
    <text evidence="1">Amino-acid biosynthesis; L-methionine biosynthesis via de novo pathway; O-succinyl-L-homoserine from L-homoserine: step 1/1.</text>
</comment>
<comment type="subcellular location">
    <subcellularLocation>
        <location evidence="1">Cytoplasm</location>
    </subcellularLocation>
</comment>
<comment type="similarity">
    <text evidence="1">Belongs to the MetA family.</text>
</comment>
<name>METAS_CITK8</name>
<keyword id="KW-0012">Acyltransferase</keyword>
<keyword id="KW-0028">Amino-acid biosynthesis</keyword>
<keyword id="KW-0963">Cytoplasm</keyword>
<keyword id="KW-0486">Methionine biosynthesis</keyword>
<keyword id="KW-1185">Reference proteome</keyword>
<keyword id="KW-0808">Transferase</keyword>
<gene>
    <name evidence="1" type="primary">metAS</name>
    <name type="ordered locus">CKO_03907</name>
</gene>